<reference key="1">
    <citation type="journal article" date="2005" name="DNA Res.">
        <title>Complete genome sequence of the facultative anaerobic magnetotactic bacterium Magnetospirillum sp. strain AMB-1.</title>
        <authorList>
            <person name="Matsunaga T."/>
            <person name="Okamura Y."/>
            <person name="Fukuda Y."/>
            <person name="Wahyudi A.T."/>
            <person name="Murase Y."/>
            <person name="Takeyama H."/>
        </authorList>
    </citation>
    <scope>NUCLEOTIDE SEQUENCE [LARGE SCALE GENOMIC DNA]</scope>
    <source>
        <strain>ATCC 700264 / AMB-1</strain>
    </source>
</reference>
<accession>Q2W3I5</accession>
<evidence type="ECO:0000250" key="1"/>
<evidence type="ECO:0000255" key="2">
    <source>
        <dbReference type="HAMAP-Rule" id="MF_01356"/>
    </source>
</evidence>
<gene>
    <name evidence="2" type="primary">nuoB</name>
    <name type="ordered locus">amb2786</name>
</gene>
<proteinExistence type="inferred from homology"/>
<name>NUOB_PARM1</name>
<dbReference type="EC" id="7.1.1.-" evidence="2"/>
<dbReference type="EMBL" id="AP007255">
    <property type="protein sequence ID" value="BAE51590.1"/>
    <property type="molecule type" value="Genomic_DNA"/>
</dbReference>
<dbReference type="SMR" id="Q2W3I5"/>
<dbReference type="STRING" id="342108.amb2786"/>
<dbReference type="KEGG" id="mag:amb2786"/>
<dbReference type="HOGENOM" id="CLU_055737_7_0_5"/>
<dbReference type="Proteomes" id="UP000007058">
    <property type="component" value="Chromosome"/>
</dbReference>
<dbReference type="GO" id="GO:0005886">
    <property type="term" value="C:plasma membrane"/>
    <property type="evidence" value="ECO:0007669"/>
    <property type="project" value="UniProtKB-SubCell"/>
</dbReference>
<dbReference type="GO" id="GO:0045271">
    <property type="term" value="C:respiratory chain complex I"/>
    <property type="evidence" value="ECO:0007669"/>
    <property type="project" value="TreeGrafter"/>
</dbReference>
<dbReference type="GO" id="GO:0051539">
    <property type="term" value="F:4 iron, 4 sulfur cluster binding"/>
    <property type="evidence" value="ECO:0007669"/>
    <property type="project" value="UniProtKB-KW"/>
</dbReference>
<dbReference type="GO" id="GO:0005506">
    <property type="term" value="F:iron ion binding"/>
    <property type="evidence" value="ECO:0007669"/>
    <property type="project" value="UniProtKB-UniRule"/>
</dbReference>
<dbReference type="GO" id="GO:0008137">
    <property type="term" value="F:NADH dehydrogenase (ubiquinone) activity"/>
    <property type="evidence" value="ECO:0007669"/>
    <property type="project" value="InterPro"/>
</dbReference>
<dbReference type="GO" id="GO:0050136">
    <property type="term" value="F:NADH:ubiquinone reductase (non-electrogenic) activity"/>
    <property type="evidence" value="ECO:0007669"/>
    <property type="project" value="UniProtKB-UniRule"/>
</dbReference>
<dbReference type="GO" id="GO:0048038">
    <property type="term" value="F:quinone binding"/>
    <property type="evidence" value="ECO:0007669"/>
    <property type="project" value="UniProtKB-KW"/>
</dbReference>
<dbReference type="GO" id="GO:0009060">
    <property type="term" value="P:aerobic respiration"/>
    <property type="evidence" value="ECO:0007669"/>
    <property type="project" value="TreeGrafter"/>
</dbReference>
<dbReference type="GO" id="GO:0015990">
    <property type="term" value="P:electron transport coupled proton transport"/>
    <property type="evidence" value="ECO:0007669"/>
    <property type="project" value="TreeGrafter"/>
</dbReference>
<dbReference type="FunFam" id="3.40.50.12280:FF:000001">
    <property type="entry name" value="NADH-quinone oxidoreductase subunit B 2"/>
    <property type="match status" value="1"/>
</dbReference>
<dbReference type="Gene3D" id="3.40.50.12280">
    <property type="match status" value="1"/>
</dbReference>
<dbReference type="HAMAP" id="MF_01356">
    <property type="entry name" value="NDH1_NuoB"/>
    <property type="match status" value="1"/>
</dbReference>
<dbReference type="InterPro" id="IPR006137">
    <property type="entry name" value="NADH_UbQ_OxRdtase-like_20kDa"/>
</dbReference>
<dbReference type="InterPro" id="IPR006138">
    <property type="entry name" value="NADH_UQ_OxRdtase_20Kd_su"/>
</dbReference>
<dbReference type="NCBIfam" id="TIGR01957">
    <property type="entry name" value="nuoB_fam"/>
    <property type="match status" value="1"/>
</dbReference>
<dbReference type="NCBIfam" id="NF005012">
    <property type="entry name" value="PRK06411.1"/>
    <property type="match status" value="1"/>
</dbReference>
<dbReference type="PANTHER" id="PTHR11995">
    <property type="entry name" value="NADH DEHYDROGENASE"/>
    <property type="match status" value="1"/>
</dbReference>
<dbReference type="PANTHER" id="PTHR11995:SF14">
    <property type="entry name" value="NADH DEHYDROGENASE [UBIQUINONE] IRON-SULFUR PROTEIN 7, MITOCHONDRIAL"/>
    <property type="match status" value="1"/>
</dbReference>
<dbReference type="Pfam" id="PF01058">
    <property type="entry name" value="Oxidored_q6"/>
    <property type="match status" value="1"/>
</dbReference>
<dbReference type="SUPFAM" id="SSF56770">
    <property type="entry name" value="HydA/Nqo6-like"/>
    <property type="match status" value="1"/>
</dbReference>
<dbReference type="PROSITE" id="PS01150">
    <property type="entry name" value="COMPLEX1_20K"/>
    <property type="match status" value="1"/>
</dbReference>
<protein>
    <recommendedName>
        <fullName evidence="2">NADH-quinone oxidoreductase subunit B</fullName>
        <ecNumber evidence="2">7.1.1.-</ecNumber>
    </recommendedName>
    <alternativeName>
        <fullName evidence="2">NADH dehydrogenase I subunit B</fullName>
    </alternativeName>
    <alternativeName>
        <fullName evidence="2">NDH-1 subunit B</fullName>
    </alternativeName>
</protein>
<organism>
    <name type="scientific">Paramagnetospirillum magneticum (strain ATCC 700264 / AMB-1)</name>
    <name type="common">Magnetospirillum magneticum</name>
    <dbReference type="NCBI Taxonomy" id="342108"/>
    <lineage>
        <taxon>Bacteria</taxon>
        <taxon>Pseudomonadati</taxon>
        <taxon>Pseudomonadota</taxon>
        <taxon>Alphaproteobacteria</taxon>
        <taxon>Rhodospirillales</taxon>
        <taxon>Magnetospirillaceae</taxon>
        <taxon>Paramagnetospirillum</taxon>
    </lineage>
</organism>
<keyword id="KW-0004">4Fe-4S</keyword>
<keyword id="KW-0997">Cell inner membrane</keyword>
<keyword id="KW-1003">Cell membrane</keyword>
<keyword id="KW-0408">Iron</keyword>
<keyword id="KW-0411">Iron-sulfur</keyword>
<keyword id="KW-0472">Membrane</keyword>
<keyword id="KW-0479">Metal-binding</keyword>
<keyword id="KW-0520">NAD</keyword>
<keyword id="KW-0874">Quinone</keyword>
<keyword id="KW-1278">Translocase</keyword>
<keyword id="KW-0813">Transport</keyword>
<keyword id="KW-0830">Ubiquinone</keyword>
<feature type="chain" id="PRO_0000358421" description="NADH-quinone oxidoreductase subunit B">
    <location>
        <begin position="1"/>
        <end position="186"/>
    </location>
</feature>
<feature type="binding site" evidence="2">
    <location>
        <position position="65"/>
    </location>
    <ligand>
        <name>[4Fe-4S] cluster</name>
        <dbReference type="ChEBI" id="CHEBI:49883"/>
    </ligand>
</feature>
<feature type="binding site" evidence="2">
    <location>
        <position position="66"/>
    </location>
    <ligand>
        <name>[4Fe-4S] cluster</name>
        <dbReference type="ChEBI" id="CHEBI:49883"/>
    </ligand>
</feature>
<feature type="binding site" evidence="2">
    <location>
        <position position="130"/>
    </location>
    <ligand>
        <name>[4Fe-4S] cluster</name>
        <dbReference type="ChEBI" id="CHEBI:49883"/>
    </ligand>
</feature>
<feature type="binding site" evidence="2">
    <location>
        <position position="160"/>
    </location>
    <ligand>
        <name>[4Fe-4S] cluster</name>
        <dbReference type="ChEBI" id="CHEBI:49883"/>
    </ligand>
</feature>
<comment type="function">
    <text evidence="1">NDH-1 shuttles electrons from NADH, via FMN and iron-sulfur (Fe-S) centers, to quinones in the respiratory chain. Couples the redox reaction to proton translocation (for every two electrons transferred, four hydrogen ions are translocated across the cytoplasmic membrane), and thus conserves the redox energy in a proton gradient (By similarity).</text>
</comment>
<comment type="catalytic activity">
    <reaction evidence="2">
        <text>a quinone + NADH + 5 H(+)(in) = a quinol + NAD(+) + 4 H(+)(out)</text>
        <dbReference type="Rhea" id="RHEA:57888"/>
        <dbReference type="ChEBI" id="CHEBI:15378"/>
        <dbReference type="ChEBI" id="CHEBI:24646"/>
        <dbReference type="ChEBI" id="CHEBI:57540"/>
        <dbReference type="ChEBI" id="CHEBI:57945"/>
        <dbReference type="ChEBI" id="CHEBI:132124"/>
    </reaction>
</comment>
<comment type="cofactor">
    <cofactor evidence="2">
        <name>[4Fe-4S] cluster</name>
        <dbReference type="ChEBI" id="CHEBI:49883"/>
    </cofactor>
    <text evidence="2">Binds 1 [4Fe-4S] cluster.</text>
</comment>
<comment type="subunit">
    <text evidence="2">NDH-1 is composed of 14 different subunits. Subunits NuoB, C, D, E, F, and G constitute the peripheral sector of the complex.</text>
</comment>
<comment type="subcellular location">
    <subcellularLocation>
        <location evidence="2">Cell inner membrane</location>
        <topology evidence="2">Peripheral membrane protein</topology>
        <orientation evidence="2">Cytoplasmic side</orientation>
    </subcellularLocation>
</comment>
<comment type="similarity">
    <text evidence="2">Belongs to the complex I 20 kDa subunit family.</text>
</comment>
<sequence length="186" mass="20115">MNPSAGGILSPDHAAALPPGPAQDALLKAVTTEISDKGFVLASVDAVVNWARTGSLWPMTFGLACCAVEMMHAGCSRYDMDRFGVVFRPSPRQSDLMIVAGTLTNKMAPALRRVYDQMAEPRWVISMGSCANGGGYYHYSYSVVRGCDRIVPVDIYVPGCPPSAEALMYGILQLQKKIRRTGSILR</sequence>